<comment type="function">
    <text evidence="1 2 3 4 7">Plays a crucial role in the metabolism of thyroid hormones (TH) and has specific roles in TH activation and inactivation by deiodination (PubMed:12161201). Catalyzes the deiodination of L-thyroxine (T4) to 3,5,3'-triiodothyronine (T3) and 3',5'-diiodothyronine (3',5'-T2) to 3'-monoiodothyronine (3'-T1) via outer-ring deiodination (ORD) (By similarity). Catalyzes the deiodination of T4 to 3,3',5'-triiodothyronine (rT3), T3 to 3,3'-diiodothyronine (3,3'-T2), 3,5-diiodothyronine (3,5-T2) to 3-monoiodothyronine (3-T1) and 3,3'-T2 to 3-T1 via inner-ring deiodination (IRD) (By similarity). Catalyzes the deiodination of rT3 to 3,3'-T2 via ORD (PubMed:12161201). Catalyzes the phenolic ring deiodinations of 3,3',5'-triiodothyronamine, 3',5'-diiodothyronamine and 3,3'-diiodothyronamine as well as tyrosyl ring deiodinations of 3,5,3'-triiodothyronamine and 3,5-diiodothyronamine (By similarity). Catalyzes the deiodination of L-thyroxine sulfate and 3,3',5-triiodo-L-thyronine sulfate via IRD and of 3,3',5'-triiodo-L-thyronine sulfate via ORD (By similarity).</text>
</comment>
<comment type="catalytic activity">
    <reaction evidence="6">
        <text>3,3',5-triiodo-L-thyronine + iodide + A + H(+) = L-thyroxine + AH2</text>
        <dbReference type="Rhea" id="RHEA:19745"/>
        <dbReference type="ChEBI" id="CHEBI:13193"/>
        <dbReference type="ChEBI" id="CHEBI:15378"/>
        <dbReference type="ChEBI" id="CHEBI:16382"/>
        <dbReference type="ChEBI" id="CHEBI:17499"/>
        <dbReference type="ChEBI" id="CHEBI:58448"/>
        <dbReference type="ChEBI" id="CHEBI:533015"/>
        <dbReference type="EC" id="1.21.99.4"/>
    </reaction>
    <physiologicalReaction direction="right-to-left" evidence="3">
        <dbReference type="Rhea" id="RHEA:19747"/>
    </physiologicalReaction>
</comment>
<comment type="catalytic activity">
    <reaction evidence="3">
        <text>3,3',5'-triiodo-L-thyronine + iodide + A + H(+) = L-thyroxine + AH2</text>
        <dbReference type="Rhea" id="RHEA:18897"/>
        <dbReference type="ChEBI" id="CHEBI:13193"/>
        <dbReference type="ChEBI" id="CHEBI:15378"/>
        <dbReference type="ChEBI" id="CHEBI:16382"/>
        <dbReference type="ChEBI" id="CHEBI:17499"/>
        <dbReference type="ChEBI" id="CHEBI:57261"/>
        <dbReference type="ChEBI" id="CHEBI:58448"/>
        <dbReference type="EC" id="1.21.99.3"/>
    </reaction>
    <physiologicalReaction direction="right-to-left" evidence="3">
        <dbReference type="Rhea" id="RHEA:18899"/>
    </physiologicalReaction>
</comment>
<comment type="catalytic activity">
    <reaction evidence="7">
        <text>3,3'-diiodo-L-thyronine + iodide + A + H(+) = 3,3',5'-triiodo-L-thyronine + AH2</text>
        <dbReference type="Rhea" id="RHEA:82575"/>
        <dbReference type="ChEBI" id="CHEBI:13193"/>
        <dbReference type="ChEBI" id="CHEBI:15378"/>
        <dbReference type="ChEBI" id="CHEBI:16382"/>
        <dbReference type="ChEBI" id="CHEBI:17499"/>
        <dbReference type="ChEBI" id="CHEBI:57261"/>
        <dbReference type="ChEBI" id="CHEBI:176514"/>
    </reaction>
    <physiologicalReaction direction="right-to-left" evidence="9">
        <dbReference type="Rhea" id="RHEA:82577"/>
    </physiologicalReaction>
</comment>
<comment type="catalytic activity">
    <reaction evidence="3">
        <text>3,3'-diiodo-L-thyronine + iodide + A + H(+) = 3,3',5-triiodo-L-thyronine + AH2</text>
        <dbReference type="Rhea" id="RHEA:82571"/>
        <dbReference type="ChEBI" id="CHEBI:13193"/>
        <dbReference type="ChEBI" id="CHEBI:15378"/>
        <dbReference type="ChEBI" id="CHEBI:16382"/>
        <dbReference type="ChEBI" id="CHEBI:17499"/>
        <dbReference type="ChEBI" id="CHEBI:176514"/>
        <dbReference type="ChEBI" id="CHEBI:533015"/>
    </reaction>
    <physiologicalReaction direction="right-to-left" evidence="3">
        <dbReference type="Rhea" id="RHEA:82573"/>
    </physiologicalReaction>
</comment>
<comment type="catalytic activity">
    <reaction evidence="2">
        <text>3'-iodo-L-thyronine + iodide + A + H(+) = 3',5'-diiodo-L-thyronine + AH2</text>
        <dbReference type="Rhea" id="RHEA:82899"/>
        <dbReference type="ChEBI" id="CHEBI:13193"/>
        <dbReference type="ChEBI" id="CHEBI:15378"/>
        <dbReference type="ChEBI" id="CHEBI:16382"/>
        <dbReference type="ChEBI" id="CHEBI:17499"/>
        <dbReference type="ChEBI" id="CHEBI:195762"/>
        <dbReference type="ChEBI" id="CHEBI:232695"/>
    </reaction>
    <physiologicalReaction direction="right-to-left" evidence="2">
        <dbReference type="Rhea" id="RHEA:82901"/>
    </physiologicalReaction>
</comment>
<comment type="catalytic activity">
    <reaction evidence="4">
        <text>3-iodo-L-thyronine + iodide + A + H(+) = 3,5-diiodo-L-thyronine + AH2</text>
        <dbReference type="Rhea" id="RHEA:82895"/>
        <dbReference type="ChEBI" id="CHEBI:13193"/>
        <dbReference type="ChEBI" id="CHEBI:15378"/>
        <dbReference type="ChEBI" id="CHEBI:16382"/>
        <dbReference type="ChEBI" id="CHEBI:17499"/>
        <dbReference type="ChEBI" id="CHEBI:232626"/>
        <dbReference type="ChEBI" id="CHEBI:232627"/>
    </reaction>
    <physiologicalReaction direction="right-to-left" evidence="4">
        <dbReference type="Rhea" id="RHEA:82897"/>
    </physiologicalReaction>
</comment>
<comment type="catalytic activity">
    <reaction evidence="4">
        <text>3-iodo-L-thyronine + iodide + A + H(+) = 3,3'-diiodo-L-thyronine + AH2</text>
        <dbReference type="Rhea" id="RHEA:83783"/>
        <dbReference type="ChEBI" id="CHEBI:13193"/>
        <dbReference type="ChEBI" id="CHEBI:15378"/>
        <dbReference type="ChEBI" id="CHEBI:16382"/>
        <dbReference type="ChEBI" id="CHEBI:17499"/>
        <dbReference type="ChEBI" id="CHEBI:176514"/>
        <dbReference type="ChEBI" id="CHEBI:232627"/>
    </reaction>
    <physiologicalReaction direction="right-to-left" evidence="4">
        <dbReference type="Rhea" id="RHEA:83785"/>
    </physiologicalReaction>
</comment>
<comment type="catalytic activity">
    <reaction evidence="4">
        <text>3,3'-diiodothyronamine + iodide + A + H(+) = 3,3',5'-triiodothyronamine + AH2</text>
        <dbReference type="Rhea" id="RHEA:83795"/>
        <dbReference type="ChEBI" id="CHEBI:13193"/>
        <dbReference type="ChEBI" id="CHEBI:15378"/>
        <dbReference type="ChEBI" id="CHEBI:16382"/>
        <dbReference type="ChEBI" id="CHEBI:17499"/>
        <dbReference type="ChEBI" id="CHEBI:233341"/>
        <dbReference type="ChEBI" id="CHEBI:233343"/>
    </reaction>
    <physiologicalReaction direction="right-to-left" evidence="4">
        <dbReference type="Rhea" id="RHEA:83797"/>
    </physiologicalReaction>
</comment>
<comment type="catalytic activity">
    <reaction evidence="4">
        <text>3'-iodothyronamine + iodide + A + H(+) = 3',5'-diiodothyronamine + AH2</text>
        <dbReference type="Rhea" id="RHEA:83803"/>
        <dbReference type="ChEBI" id="CHEBI:13193"/>
        <dbReference type="ChEBI" id="CHEBI:15378"/>
        <dbReference type="ChEBI" id="CHEBI:16382"/>
        <dbReference type="ChEBI" id="CHEBI:17499"/>
        <dbReference type="ChEBI" id="CHEBI:233339"/>
        <dbReference type="ChEBI" id="CHEBI:233342"/>
    </reaction>
    <physiologicalReaction direction="right-to-left" evidence="4">
        <dbReference type="Rhea" id="RHEA:83805"/>
    </physiologicalReaction>
</comment>
<comment type="catalytic activity">
    <reaction evidence="4">
        <text>3-iodothyronamine + iodide + A + H(+) = 3,3'-diiodothyronamine + AH2</text>
        <dbReference type="Rhea" id="RHEA:83827"/>
        <dbReference type="ChEBI" id="CHEBI:13193"/>
        <dbReference type="ChEBI" id="CHEBI:15378"/>
        <dbReference type="ChEBI" id="CHEBI:16382"/>
        <dbReference type="ChEBI" id="CHEBI:17499"/>
        <dbReference type="ChEBI" id="CHEBI:231647"/>
        <dbReference type="ChEBI" id="CHEBI:233341"/>
    </reaction>
    <physiologicalReaction direction="right-to-left" evidence="4">
        <dbReference type="Rhea" id="RHEA:83829"/>
    </physiologicalReaction>
</comment>
<comment type="catalytic activity">
    <reaction evidence="4">
        <text>3,3'-diiodothyronamine + iodide + A + H(+) = 3,3',5-triiodothyronamine + AH2</text>
        <dbReference type="Rhea" id="RHEA:83811"/>
        <dbReference type="ChEBI" id="CHEBI:13193"/>
        <dbReference type="ChEBI" id="CHEBI:15378"/>
        <dbReference type="ChEBI" id="CHEBI:16382"/>
        <dbReference type="ChEBI" id="CHEBI:17499"/>
        <dbReference type="ChEBI" id="CHEBI:233341"/>
        <dbReference type="ChEBI" id="CHEBI:233426"/>
    </reaction>
    <physiologicalReaction direction="right-to-left" evidence="4">
        <dbReference type="Rhea" id="RHEA:83813"/>
    </physiologicalReaction>
</comment>
<comment type="catalytic activity">
    <reaction evidence="4">
        <text>3-iodothyronamine + iodide + A + H(+) = 3,5-diiodothyronamine + AH2</text>
        <dbReference type="Rhea" id="RHEA:83823"/>
        <dbReference type="ChEBI" id="CHEBI:13193"/>
        <dbReference type="ChEBI" id="CHEBI:15378"/>
        <dbReference type="ChEBI" id="CHEBI:16382"/>
        <dbReference type="ChEBI" id="CHEBI:17499"/>
        <dbReference type="ChEBI" id="CHEBI:231647"/>
        <dbReference type="ChEBI" id="CHEBI:233340"/>
    </reaction>
    <physiologicalReaction direction="right-to-left" evidence="4">
        <dbReference type="Rhea" id="RHEA:83825"/>
    </physiologicalReaction>
</comment>
<comment type="catalytic activity">
    <reaction evidence="1">
        <text>3,3'-diiodo-L-thyronine sulfate + iodide + A + H(+) = 3,3',5'-triiodo-L-thyronine sulfate + AH2</text>
        <dbReference type="Rhea" id="RHEA:83831"/>
        <dbReference type="ChEBI" id="CHEBI:13193"/>
        <dbReference type="ChEBI" id="CHEBI:15378"/>
        <dbReference type="ChEBI" id="CHEBI:16382"/>
        <dbReference type="ChEBI" id="CHEBI:17499"/>
        <dbReference type="ChEBI" id="CHEBI:176513"/>
        <dbReference type="ChEBI" id="CHEBI:176515"/>
    </reaction>
    <physiologicalReaction direction="right-to-left" evidence="1">
        <dbReference type="Rhea" id="RHEA:83833"/>
    </physiologicalReaction>
</comment>
<comment type="catalytic activity">
    <reaction evidence="1">
        <text>3,3',5'-triiodo-L-thyronine sulfate + iodide + A + H(+) = L-thyroxine sulfate + AH2</text>
        <dbReference type="Rhea" id="RHEA:83835"/>
        <dbReference type="ChEBI" id="CHEBI:13193"/>
        <dbReference type="ChEBI" id="CHEBI:15378"/>
        <dbReference type="ChEBI" id="CHEBI:16382"/>
        <dbReference type="ChEBI" id="CHEBI:17499"/>
        <dbReference type="ChEBI" id="CHEBI:176512"/>
        <dbReference type="ChEBI" id="CHEBI:176513"/>
    </reaction>
    <physiologicalReaction direction="right-to-left" evidence="1">
        <dbReference type="Rhea" id="RHEA:83837"/>
    </physiologicalReaction>
</comment>
<comment type="catalytic activity">
    <reaction evidence="1">
        <text>3,3'-diiodo-L-thyronine sulfate + iodide + A + H(+) = 3,3',5-triiodo-L-thyronine sulfate + AH2</text>
        <dbReference type="Rhea" id="RHEA:83751"/>
        <dbReference type="ChEBI" id="CHEBI:13193"/>
        <dbReference type="ChEBI" id="CHEBI:15378"/>
        <dbReference type="ChEBI" id="CHEBI:16382"/>
        <dbReference type="ChEBI" id="CHEBI:17499"/>
        <dbReference type="ChEBI" id="CHEBI:176511"/>
        <dbReference type="ChEBI" id="CHEBI:176515"/>
    </reaction>
    <physiologicalReaction direction="right-to-left" evidence="1">
        <dbReference type="Rhea" id="RHEA:83753"/>
    </physiologicalReaction>
</comment>
<comment type="biophysicochemical properties">
    <kinetics>
        <KM evidence="7">140 nM for 3,3',5'-triiodo-L-thyronine</KM>
    </kinetics>
</comment>
<comment type="subunit">
    <text evidence="2">Predominantly monomer. Can form homodimers but homodimerization is not essential for enzyme activity.</text>
</comment>
<comment type="subcellular location">
    <subcellularLocation>
        <location evidence="1">Cell membrane</location>
        <topology evidence="1">Single-pass type III membrane protein</topology>
    </subcellularLocation>
    <subcellularLocation>
        <location evidence="1">Endoplasmic reticulum membrane</location>
        <topology evidence="1">Single-pass type III membrane protein</topology>
    </subcellularLocation>
    <subcellularLocation>
        <location evidence="1">Basolateral cell membrane</location>
        <topology evidence="1">Single-pass type III membrane protein</topology>
    </subcellularLocation>
</comment>
<comment type="tissue specificity">
    <text evidence="7">Liver specific.</text>
</comment>
<comment type="similarity">
    <text evidence="8">Belongs to the iodothyronine deiodinase family.</text>
</comment>
<organism>
    <name type="scientific">Suncus murinus</name>
    <name type="common">Asian house shrew</name>
    <name type="synonym">Musk shrew</name>
    <dbReference type="NCBI Taxonomy" id="9378"/>
    <lineage>
        <taxon>Eukaryota</taxon>
        <taxon>Metazoa</taxon>
        <taxon>Chordata</taxon>
        <taxon>Craniata</taxon>
        <taxon>Vertebrata</taxon>
        <taxon>Euteleostomi</taxon>
        <taxon>Mammalia</taxon>
        <taxon>Eutheria</taxon>
        <taxon>Laurasiatheria</taxon>
        <taxon>Eulipotyphla</taxon>
        <taxon>Soricidae</taxon>
        <taxon>Crocidurinae</taxon>
        <taxon>Suncus</taxon>
    </lineage>
</organism>
<evidence type="ECO:0000250" key="1">
    <source>
        <dbReference type="UniProtKB" id="P24389"/>
    </source>
</evidence>
<evidence type="ECO:0000250" key="2">
    <source>
        <dbReference type="UniProtKB" id="P49895"/>
    </source>
</evidence>
<evidence type="ECO:0000250" key="3">
    <source>
        <dbReference type="UniProtKB" id="Q2QEI3"/>
    </source>
</evidence>
<evidence type="ECO:0000250" key="4">
    <source>
        <dbReference type="UniProtKB" id="Q61153"/>
    </source>
</evidence>
<evidence type="ECO:0000255" key="5"/>
<evidence type="ECO:0000255" key="6">
    <source>
        <dbReference type="PROSITE-ProRule" id="PRU10107"/>
    </source>
</evidence>
<evidence type="ECO:0000269" key="7">
    <source>
    </source>
</evidence>
<evidence type="ECO:0000305" key="8"/>
<evidence type="ECO:0000305" key="9">
    <source>
    </source>
</evidence>
<gene>
    <name type="primary">DIO1</name>
    <name type="synonym">TXDI1</name>
</gene>
<proteinExistence type="evidence at protein level"/>
<feature type="chain" id="PRO_0000154314" description="Type I iodothyronine deiodinase">
    <location>
        <begin position="1"/>
        <end position="257"/>
    </location>
</feature>
<feature type="topological domain" description="Extracellular" evidence="1">
    <location>
        <begin position="1"/>
        <end position="12"/>
    </location>
</feature>
<feature type="transmembrane region" description="Helical; Signal-anchor for type III membrane protein" evidence="5">
    <location>
        <begin position="13"/>
        <end position="33"/>
    </location>
</feature>
<feature type="topological domain" description="Cytoplasmic" evidence="1">
    <location>
        <begin position="34"/>
        <end position="257"/>
    </location>
</feature>
<feature type="active site" evidence="1">
    <location>
        <position position="126"/>
    </location>
</feature>
<feature type="non-standard amino acid" description="Selenocysteine" evidence="1">
    <location>
        <position position="126"/>
    </location>
</feature>
<name>IOD1_SUNMU</name>
<reference key="1">
    <citation type="journal article" date="2002" name="Gen. Comp. Endocrinol.">
        <title>Type 1 iodothyronine deiodinase in the house musk shrew (Suncus murinus, Insectivora: Soricidae): cloning and characterization of complementary DNA, unique tissue distribution and regulation by T3.</title>
        <authorList>
            <person name="Rogatcheva M."/>
            <person name="Hayashi Y."/>
            <person name="Oda S."/>
            <person name="Seo H."/>
            <person name="Cua K."/>
            <person name="Refetoff S."/>
            <person name="Murakami M."/>
            <person name="Mori M."/>
            <person name="Murata Y."/>
        </authorList>
    </citation>
    <scope>NUCLEOTIDE SEQUENCE [MRNA]</scope>
    <scope>FUNCTION</scope>
    <scope>TISSUE SPECIFICITY</scope>
    <scope>CATALYTIC ACTIVITY</scope>
    <scope>BIOPHYSICOCHEMICAL PROPERTIES</scope>
</reference>
<sequence length="257" mass="29454">MGLPGLGLLLKRFGVLVRVALKVAVGKVLLTLWPSAIRPHLLAMSEKTGMAKNPRFTYEDWAPTFFSTQYFWFVLKVNWQQLEDRTKQGDIAPDSPVVHLSGQRARLWDFMQGNRPLVLNFGSCSUPSFLFKFDQFKRLVEDFSSVADFLTVYIEEAHASDGWAFKNNVDIRRHRDLQERLQAARLLLDRNPGCPVVVDTMENRSSQLYAALPERLYVLQEGRILYKGGPGPWNYHPEEVHAVLEQLCRSSAQSPRL</sequence>
<dbReference type="EC" id="1.21.99.3" evidence="3"/>
<dbReference type="EC" id="1.21.99.4" evidence="3"/>
<dbReference type="EMBL" id="AB055517">
    <property type="protein sequence ID" value="BAB62750.1"/>
    <property type="molecule type" value="mRNA"/>
</dbReference>
<dbReference type="GO" id="GO:0016323">
    <property type="term" value="C:basolateral plasma membrane"/>
    <property type="evidence" value="ECO:0007669"/>
    <property type="project" value="UniProtKB-SubCell"/>
</dbReference>
<dbReference type="GO" id="GO:0005789">
    <property type="term" value="C:endoplasmic reticulum membrane"/>
    <property type="evidence" value="ECO:0007669"/>
    <property type="project" value="UniProtKB-SubCell"/>
</dbReference>
<dbReference type="GO" id="GO:0004800">
    <property type="term" value="F:thyroxine 5'-deiodinase activity"/>
    <property type="evidence" value="ECO:0000250"/>
    <property type="project" value="UniProtKB"/>
</dbReference>
<dbReference type="GO" id="GO:0033798">
    <property type="term" value="F:thyroxine 5-deiodinase activity"/>
    <property type="evidence" value="ECO:0000250"/>
    <property type="project" value="UniProtKB"/>
</dbReference>
<dbReference type="GO" id="GO:0042446">
    <property type="term" value="P:hormone biosynthetic process"/>
    <property type="evidence" value="ECO:0007669"/>
    <property type="project" value="UniProtKB-KW"/>
</dbReference>
<dbReference type="GO" id="GO:0042404">
    <property type="term" value="P:thyroid hormone catabolic process"/>
    <property type="evidence" value="ECO:0000250"/>
    <property type="project" value="UniProtKB"/>
</dbReference>
<dbReference type="FunFam" id="3.40.30.10:FF:000192">
    <property type="entry name" value="Iodothyronine deiodinase"/>
    <property type="match status" value="1"/>
</dbReference>
<dbReference type="Gene3D" id="3.40.30.10">
    <property type="entry name" value="Glutaredoxin"/>
    <property type="match status" value="1"/>
</dbReference>
<dbReference type="InterPro" id="IPR000643">
    <property type="entry name" value="Iodothyronine_deiodinase"/>
</dbReference>
<dbReference type="InterPro" id="IPR008261">
    <property type="entry name" value="Iodothyronine_deiodinase_AS"/>
</dbReference>
<dbReference type="InterPro" id="IPR027252">
    <property type="entry name" value="Iodothyronine_deiodinase_I/III"/>
</dbReference>
<dbReference type="InterPro" id="IPR036249">
    <property type="entry name" value="Thioredoxin-like_sf"/>
</dbReference>
<dbReference type="PANTHER" id="PTHR11781">
    <property type="entry name" value="IODOTHYRONINE DEIODINASE"/>
    <property type="match status" value="1"/>
</dbReference>
<dbReference type="PANTHER" id="PTHR11781:SF22">
    <property type="entry name" value="TYPE I IODOTHYRONINE DEIODINASE"/>
    <property type="match status" value="1"/>
</dbReference>
<dbReference type="Pfam" id="PF00837">
    <property type="entry name" value="T4_deiodinase"/>
    <property type="match status" value="1"/>
</dbReference>
<dbReference type="PIRSF" id="PIRSF001330">
    <property type="entry name" value="IOD"/>
    <property type="match status" value="1"/>
</dbReference>
<dbReference type="PIRSF" id="PIRSF500144">
    <property type="entry name" value="IODI_III"/>
    <property type="match status" value="1"/>
</dbReference>
<dbReference type="SUPFAM" id="SSF52833">
    <property type="entry name" value="Thioredoxin-like"/>
    <property type="match status" value="1"/>
</dbReference>
<dbReference type="PROSITE" id="PS01205">
    <property type="entry name" value="T4_DEIODINASE"/>
    <property type="match status" value="1"/>
</dbReference>
<protein>
    <recommendedName>
        <fullName>Type I iodothyronine deiodinase</fullName>
        <ecNumber evidence="3">1.21.99.3</ecNumber>
        <ecNumber evidence="3">1.21.99.4</ecNumber>
    </recommendedName>
    <alternativeName>
        <fullName>5DI</fullName>
    </alternativeName>
    <alternativeName>
        <fullName>DIOI</fullName>
    </alternativeName>
    <alternativeName>
        <fullName>Type 1 DI</fullName>
    </alternativeName>
    <alternativeName>
        <fullName>Type-I 5'-deiodinase</fullName>
    </alternativeName>
</protein>
<accession>Q95N00</accession>
<keyword id="KW-1003">Cell membrane</keyword>
<keyword id="KW-0256">Endoplasmic reticulum</keyword>
<keyword id="KW-0472">Membrane</keyword>
<keyword id="KW-0560">Oxidoreductase</keyword>
<keyword id="KW-0712">Selenocysteine</keyword>
<keyword id="KW-0893">Thyroid hormones biosynthesis</keyword>
<keyword id="KW-0812">Transmembrane</keyword>
<keyword id="KW-1133">Transmembrane helix</keyword>